<protein>
    <recommendedName>
        <fullName>NADH-ubiquinone oxidoreductase chain 3</fullName>
        <ecNumber>7.1.1.2</ecNumber>
    </recommendedName>
    <alternativeName>
        <fullName>NADH dehydrogenase subunit 3</fullName>
    </alternativeName>
</protein>
<comment type="function">
    <text evidence="1">Core subunit of the mitochondrial membrane respiratory chain NADH dehydrogenase (Complex I) that is believed to belong to the minimal assembly required for catalysis. Complex I functions in the transfer of electrons from NADH to the respiratory chain. The immediate electron acceptor for the enzyme is believed to be ubiquinone (By similarity).</text>
</comment>
<comment type="catalytic activity">
    <reaction>
        <text>a ubiquinone + NADH + 5 H(+)(in) = a ubiquinol + NAD(+) + 4 H(+)(out)</text>
        <dbReference type="Rhea" id="RHEA:29091"/>
        <dbReference type="Rhea" id="RHEA-COMP:9565"/>
        <dbReference type="Rhea" id="RHEA-COMP:9566"/>
        <dbReference type="ChEBI" id="CHEBI:15378"/>
        <dbReference type="ChEBI" id="CHEBI:16389"/>
        <dbReference type="ChEBI" id="CHEBI:17976"/>
        <dbReference type="ChEBI" id="CHEBI:57540"/>
        <dbReference type="ChEBI" id="CHEBI:57945"/>
        <dbReference type="EC" id="7.1.1.2"/>
    </reaction>
</comment>
<comment type="subcellular location">
    <subcellularLocation>
        <location evidence="1">Mitochondrion membrane</location>
        <topology evidence="1">Multi-pass membrane protein</topology>
    </subcellularLocation>
</comment>
<comment type="similarity">
    <text evidence="3">Belongs to the complex I subunit 3 family.</text>
</comment>
<evidence type="ECO:0000250" key="1"/>
<evidence type="ECO:0000255" key="2"/>
<evidence type="ECO:0000305" key="3"/>
<accession>O78686</accession>
<geneLocation type="mitochondrion"/>
<gene>
    <name type="primary">MT-ND3</name>
    <name type="synonym">MTND3</name>
    <name type="synonym">NADH3</name>
    <name type="synonym">ND3</name>
</gene>
<organism>
    <name type="scientific">Carassius auratus</name>
    <name type="common">Goldfish</name>
    <dbReference type="NCBI Taxonomy" id="7957"/>
    <lineage>
        <taxon>Eukaryota</taxon>
        <taxon>Metazoa</taxon>
        <taxon>Chordata</taxon>
        <taxon>Craniata</taxon>
        <taxon>Vertebrata</taxon>
        <taxon>Euteleostomi</taxon>
        <taxon>Actinopterygii</taxon>
        <taxon>Neopterygii</taxon>
        <taxon>Teleostei</taxon>
        <taxon>Ostariophysi</taxon>
        <taxon>Cypriniformes</taxon>
        <taxon>Cyprinidae</taxon>
        <taxon>Cyprininae</taxon>
        <taxon>Carassius</taxon>
    </lineage>
</organism>
<dbReference type="EC" id="7.1.1.2"/>
<dbReference type="EMBL" id="AB006953">
    <property type="protein sequence ID" value="BAA31245.1"/>
    <property type="molecule type" value="Genomic_DNA"/>
</dbReference>
<dbReference type="RefSeq" id="NP_008595.1">
    <property type="nucleotide sequence ID" value="NC_002079.1"/>
</dbReference>
<dbReference type="SMR" id="O78686"/>
<dbReference type="GeneID" id="808425"/>
<dbReference type="CTD" id="4537"/>
<dbReference type="OrthoDB" id="154075at2759"/>
<dbReference type="Proteomes" id="UP000515129">
    <property type="component" value="Mitochondrion MT"/>
</dbReference>
<dbReference type="GO" id="GO:0031966">
    <property type="term" value="C:mitochondrial membrane"/>
    <property type="evidence" value="ECO:0007669"/>
    <property type="project" value="UniProtKB-SubCell"/>
</dbReference>
<dbReference type="GO" id="GO:0030964">
    <property type="term" value="C:NADH dehydrogenase complex"/>
    <property type="evidence" value="ECO:0007669"/>
    <property type="project" value="TreeGrafter"/>
</dbReference>
<dbReference type="GO" id="GO:0008137">
    <property type="term" value="F:NADH dehydrogenase (ubiquinone) activity"/>
    <property type="evidence" value="ECO:0007669"/>
    <property type="project" value="UniProtKB-EC"/>
</dbReference>
<dbReference type="FunFam" id="1.20.58.1610:FF:000004">
    <property type="entry name" value="NADH-quinone oxidoreductase subunit A"/>
    <property type="match status" value="1"/>
</dbReference>
<dbReference type="Gene3D" id="1.20.58.1610">
    <property type="entry name" value="NADH:ubiquinone/plastoquinone oxidoreductase, chain 3"/>
    <property type="match status" value="1"/>
</dbReference>
<dbReference type="InterPro" id="IPR000440">
    <property type="entry name" value="NADH_UbQ/plastoQ_OxRdtase_su3"/>
</dbReference>
<dbReference type="InterPro" id="IPR038430">
    <property type="entry name" value="NDAH_ubi_oxred_su3_sf"/>
</dbReference>
<dbReference type="PANTHER" id="PTHR11058">
    <property type="entry name" value="NADH-UBIQUINONE OXIDOREDUCTASE CHAIN 3"/>
    <property type="match status" value="1"/>
</dbReference>
<dbReference type="PANTHER" id="PTHR11058:SF9">
    <property type="entry name" value="NADH-UBIQUINONE OXIDOREDUCTASE CHAIN 3"/>
    <property type="match status" value="1"/>
</dbReference>
<dbReference type="Pfam" id="PF00507">
    <property type="entry name" value="Oxidored_q4"/>
    <property type="match status" value="1"/>
</dbReference>
<reference key="1">
    <citation type="journal article" date="1998" name="Zool. Sci.">
        <title>The complete sequence of mitochondrial genome from a gynogenetic triploid 'ginbuna' (Carassius auratus langsdorfi).</title>
        <authorList>
            <person name="Murakami M."/>
            <person name="Yamashita Y."/>
            <person name="Fujitani H."/>
        </authorList>
    </citation>
    <scope>NUCLEOTIDE SEQUENCE [GENOMIC DNA]</scope>
    <source>
        <strain>AZ3 / Langsdorfi</strain>
        <tissue>Oocyte</tissue>
    </source>
</reference>
<name>NU3M_CARAU</name>
<sequence length="116" mass="13020">MNLIMTILTITAALSLILATVSFWLPQMNPDAEKLSPYECGFDPLGSARLPFSLRFFLVAILFLLFDLEIALLLPLPWGDQLNNPTGTFFWATTVLILLTLGLIYEWTQGGLEWAE</sequence>
<proteinExistence type="inferred from homology"/>
<feature type="chain" id="PRO_0000117725" description="NADH-ubiquinone oxidoreductase chain 3">
    <location>
        <begin position="1"/>
        <end position="116"/>
    </location>
</feature>
<feature type="transmembrane region" description="Helical" evidence="2">
    <location>
        <begin position="3"/>
        <end position="23"/>
    </location>
</feature>
<feature type="transmembrane region" description="Helical" evidence="2">
    <location>
        <begin position="56"/>
        <end position="76"/>
    </location>
</feature>
<feature type="transmembrane region" description="Helical" evidence="2">
    <location>
        <begin position="87"/>
        <end position="107"/>
    </location>
</feature>
<keyword id="KW-0249">Electron transport</keyword>
<keyword id="KW-0472">Membrane</keyword>
<keyword id="KW-0496">Mitochondrion</keyword>
<keyword id="KW-0520">NAD</keyword>
<keyword id="KW-1185">Reference proteome</keyword>
<keyword id="KW-0679">Respiratory chain</keyword>
<keyword id="KW-1278">Translocase</keyword>
<keyword id="KW-0812">Transmembrane</keyword>
<keyword id="KW-1133">Transmembrane helix</keyword>
<keyword id="KW-0813">Transport</keyword>
<keyword id="KW-0830">Ubiquinone</keyword>